<sequence>MSHVSICLLSEAGADPGALSILADRWGLVSDDQAVMALVLTAERLELRKRDEPKLGGIYVDFVSGTQAHRRKFGGGRGEAVAKAVGIKKGYLPRVVDATAGLGRDAFVLAALGCQVQMLERNPVVAALLDDGLRRGYLDAEIGPWLRERLTLLHASSLTALVAIEPRPEVVYLDPMYPHRQKSALVKKEMRVFQSLVGADNDADGLLAPARALATKRVVVKRPDYAEPLAGVAAQAAVVTKSHRFDIYPSSVTPPR</sequence>
<protein>
    <recommendedName>
        <fullName evidence="1">Ribosomal RNA small subunit methyltransferase J</fullName>
        <ecNumber evidence="1">2.1.1.242</ecNumber>
    </recommendedName>
    <alternativeName>
        <fullName evidence="1">16S rRNA m2G1516 methyltransferase</fullName>
    </alternativeName>
    <alternativeName>
        <fullName evidence="1">rRNA (guanine-N(2)-)-methyltransferase</fullName>
    </alternativeName>
</protein>
<keyword id="KW-0963">Cytoplasm</keyword>
<keyword id="KW-0489">Methyltransferase</keyword>
<keyword id="KW-1185">Reference proteome</keyword>
<keyword id="KW-0698">rRNA processing</keyword>
<keyword id="KW-0949">S-adenosyl-L-methionine</keyword>
<keyword id="KW-0808">Transferase</keyword>
<comment type="function">
    <text evidence="1">Specifically methylates the guanosine in position 1516 of 16S rRNA.</text>
</comment>
<comment type="catalytic activity">
    <reaction evidence="1">
        <text>guanosine(1516) in 16S rRNA + S-adenosyl-L-methionine = N(2)-methylguanosine(1516) in 16S rRNA + S-adenosyl-L-homocysteine + H(+)</text>
        <dbReference type="Rhea" id="RHEA:43220"/>
        <dbReference type="Rhea" id="RHEA-COMP:10412"/>
        <dbReference type="Rhea" id="RHEA-COMP:10413"/>
        <dbReference type="ChEBI" id="CHEBI:15378"/>
        <dbReference type="ChEBI" id="CHEBI:57856"/>
        <dbReference type="ChEBI" id="CHEBI:59789"/>
        <dbReference type="ChEBI" id="CHEBI:74269"/>
        <dbReference type="ChEBI" id="CHEBI:74481"/>
        <dbReference type="EC" id="2.1.1.242"/>
    </reaction>
</comment>
<comment type="subcellular location">
    <subcellularLocation>
        <location evidence="1">Cytoplasm</location>
    </subcellularLocation>
</comment>
<comment type="similarity">
    <text evidence="1">Belongs to the methyltransferase superfamily. RsmJ family.</text>
</comment>
<feature type="chain" id="PRO_0000212099" description="Ribosomal RNA small subunit methyltransferase J">
    <location>
        <begin position="1"/>
        <end position="256"/>
    </location>
</feature>
<feature type="binding site" evidence="1">
    <location>
        <begin position="104"/>
        <end position="105"/>
    </location>
    <ligand>
        <name>S-adenosyl-L-methionine</name>
        <dbReference type="ChEBI" id="CHEBI:59789"/>
    </ligand>
</feature>
<feature type="binding site" evidence="1">
    <location>
        <begin position="120"/>
        <end position="121"/>
    </location>
    <ligand>
        <name>S-adenosyl-L-methionine</name>
        <dbReference type="ChEBI" id="CHEBI:59789"/>
    </ligand>
</feature>
<feature type="binding site" evidence="1">
    <location>
        <begin position="156"/>
        <end position="157"/>
    </location>
    <ligand>
        <name>S-adenosyl-L-methionine</name>
        <dbReference type="ChEBI" id="CHEBI:59789"/>
    </ligand>
</feature>
<feature type="binding site" evidence="1">
    <location>
        <position position="174"/>
    </location>
    <ligand>
        <name>S-adenosyl-L-methionine</name>
        <dbReference type="ChEBI" id="CHEBI:59789"/>
    </ligand>
</feature>
<name>RSMJ_YERPE</name>
<evidence type="ECO:0000255" key="1">
    <source>
        <dbReference type="HAMAP-Rule" id="MF_01523"/>
    </source>
</evidence>
<organism>
    <name type="scientific">Yersinia pestis</name>
    <dbReference type="NCBI Taxonomy" id="632"/>
    <lineage>
        <taxon>Bacteria</taxon>
        <taxon>Pseudomonadati</taxon>
        <taxon>Pseudomonadota</taxon>
        <taxon>Gammaproteobacteria</taxon>
        <taxon>Enterobacterales</taxon>
        <taxon>Yersiniaceae</taxon>
        <taxon>Yersinia</taxon>
    </lineage>
</organism>
<proteinExistence type="inferred from homology"/>
<accession>Q8ZA46</accession>
<accession>Q0WA44</accession>
<accession>Q74QW8</accession>
<accession>Q7CG04</accession>
<gene>
    <name evidence="1" type="primary">rsmJ</name>
    <name type="ordered locus">YPO3974</name>
    <name type="ordered locus">y3856</name>
    <name type="ordered locus">YP_3336</name>
</gene>
<dbReference type="EC" id="2.1.1.242" evidence="1"/>
<dbReference type="EMBL" id="AL590842">
    <property type="protein sequence ID" value="CAL22554.1"/>
    <property type="molecule type" value="Genomic_DNA"/>
</dbReference>
<dbReference type="EMBL" id="AE009952">
    <property type="protein sequence ID" value="AAM87401.1"/>
    <property type="molecule type" value="Genomic_DNA"/>
</dbReference>
<dbReference type="EMBL" id="AE017042">
    <property type="protein sequence ID" value="AAS63501.1"/>
    <property type="molecule type" value="Genomic_DNA"/>
</dbReference>
<dbReference type="PIR" id="AG0483">
    <property type="entry name" value="AG0483"/>
</dbReference>
<dbReference type="RefSeq" id="WP_002215483.1">
    <property type="nucleotide sequence ID" value="NZ_WUCM01000026.1"/>
</dbReference>
<dbReference type="RefSeq" id="YP_002348844.1">
    <property type="nucleotide sequence ID" value="NC_003143.1"/>
</dbReference>
<dbReference type="SMR" id="Q8ZA46"/>
<dbReference type="STRING" id="214092.YPO3974"/>
<dbReference type="PaxDb" id="214092-YPO3974"/>
<dbReference type="DNASU" id="1148803"/>
<dbReference type="EnsemblBacteria" id="AAS63501">
    <property type="protein sequence ID" value="AAS63501"/>
    <property type="gene ID" value="YP_3336"/>
</dbReference>
<dbReference type="GeneID" id="96663312"/>
<dbReference type="KEGG" id="ype:YPO3974"/>
<dbReference type="KEGG" id="ypk:y3856"/>
<dbReference type="KEGG" id="ypm:YP_3336"/>
<dbReference type="PATRIC" id="fig|214092.21.peg.4504"/>
<dbReference type="eggNOG" id="COG0742">
    <property type="taxonomic scope" value="Bacteria"/>
</dbReference>
<dbReference type="HOGENOM" id="CLU_076324_0_0_6"/>
<dbReference type="OMA" id="YDIYPKK"/>
<dbReference type="OrthoDB" id="3191794at2"/>
<dbReference type="Proteomes" id="UP000000815">
    <property type="component" value="Chromosome"/>
</dbReference>
<dbReference type="Proteomes" id="UP000001019">
    <property type="component" value="Chromosome"/>
</dbReference>
<dbReference type="Proteomes" id="UP000002490">
    <property type="component" value="Chromosome"/>
</dbReference>
<dbReference type="GO" id="GO:0005737">
    <property type="term" value="C:cytoplasm"/>
    <property type="evidence" value="ECO:0007669"/>
    <property type="project" value="UniProtKB-SubCell"/>
</dbReference>
<dbReference type="GO" id="GO:0036308">
    <property type="term" value="F:16S rRNA (guanine(1516)-N(2))-methyltransferase activity"/>
    <property type="evidence" value="ECO:0000318"/>
    <property type="project" value="GO_Central"/>
</dbReference>
<dbReference type="GO" id="GO:0070475">
    <property type="term" value="P:rRNA base methylation"/>
    <property type="evidence" value="ECO:0000318"/>
    <property type="project" value="GO_Central"/>
</dbReference>
<dbReference type="CDD" id="cd02440">
    <property type="entry name" value="AdoMet_MTases"/>
    <property type="match status" value="1"/>
</dbReference>
<dbReference type="Gene3D" id="3.40.50.150">
    <property type="entry name" value="Vaccinia Virus protein VP39"/>
    <property type="match status" value="1"/>
</dbReference>
<dbReference type="Gene3D" id="3.40.1630.10">
    <property type="entry name" value="YhiQ-like domain"/>
    <property type="match status" value="1"/>
</dbReference>
<dbReference type="HAMAP" id="MF_01523">
    <property type="entry name" value="16SrRNA_methyltr_J"/>
    <property type="match status" value="1"/>
</dbReference>
<dbReference type="InterPro" id="IPR007536">
    <property type="entry name" value="16SrRNA_methylTrfase_J"/>
</dbReference>
<dbReference type="InterPro" id="IPR029063">
    <property type="entry name" value="SAM-dependent_MTases_sf"/>
</dbReference>
<dbReference type="NCBIfam" id="NF008012">
    <property type="entry name" value="PRK10742.1"/>
    <property type="match status" value="1"/>
</dbReference>
<dbReference type="PANTHER" id="PTHR36112">
    <property type="entry name" value="RIBOSOMAL RNA SMALL SUBUNIT METHYLTRANSFERASE J"/>
    <property type="match status" value="1"/>
</dbReference>
<dbReference type="PANTHER" id="PTHR36112:SF1">
    <property type="entry name" value="RIBOSOMAL RNA SMALL SUBUNIT METHYLTRANSFERASE J"/>
    <property type="match status" value="1"/>
</dbReference>
<dbReference type="Pfam" id="PF04445">
    <property type="entry name" value="SAM_MT"/>
    <property type="match status" value="1"/>
</dbReference>
<dbReference type="SUPFAM" id="SSF53335">
    <property type="entry name" value="S-adenosyl-L-methionine-dependent methyltransferases"/>
    <property type="match status" value="1"/>
</dbReference>
<reference key="1">
    <citation type="journal article" date="2001" name="Nature">
        <title>Genome sequence of Yersinia pestis, the causative agent of plague.</title>
        <authorList>
            <person name="Parkhill J."/>
            <person name="Wren B.W."/>
            <person name="Thomson N.R."/>
            <person name="Titball R.W."/>
            <person name="Holden M.T.G."/>
            <person name="Prentice M.B."/>
            <person name="Sebaihia M."/>
            <person name="James K.D."/>
            <person name="Churcher C.M."/>
            <person name="Mungall K.L."/>
            <person name="Baker S."/>
            <person name="Basham D."/>
            <person name="Bentley S.D."/>
            <person name="Brooks K."/>
            <person name="Cerdeno-Tarraga A.-M."/>
            <person name="Chillingworth T."/>
            <person name="Cronin A."/>
            <person name="Davies R.M."/>
            <person name="Davis P."/>
            <person name="Dougan G."/>
            <person name="Feltwell T."/>
            <person name="Hamlin N."/>
            <person name="Holroyd S."/>
            <person name="Jagels K."/>
            <person name="Karlyshev A.V."/>
            <person name="Leather S."/>
            <person name="Moule S."/>
            <person name="Oyston P.C.F."/>
            <person name="Quail M.A."/>
            <person name="Rutherford K.M."/>
            <person name="Simmonds M."/>
            <person name="Skelton J."/>
            <person name="Stevens K."/>
            <person name="Whitehead S."/>
            <person name="Barrell B.G."/>
        </authorList>
    </citation>
    <scope>NUCLEOTIDE SEQUENCE [LARGE SCALE GENOMIC DNA]</scope>
    <source>
        <strain>CO-92 / Biovar Orientalis</strain>
    </source>
</reference>
<reference key="2">
    <citation type="journal article" date="2002" name="J. Bacteriol.">
        <title>Genome sequence of Yersinia pestis KIM.</title>
        <authorList>
            <person name="Deng W."/>
            <person name="Burland V."/>
            <person name="Plunkett G. III"/>
            <person name="Boutin A."/>
            <person name="Mayhew G.F."/>
            <person name="Liss P."/>
            <person name="Perna N.T."/>
            <person name="Rose D.J."/>
            <person name="Mau B."/>
            <person name="Zhou S."/>
            <person name="Schwartz D.C."/>
            <person name="Fetherston J.D."/>
            <person name="Lindler L.E."/>
            <person name="Brubaker R.R."/>
            <person name="Plano G.V."/>
            <person name="Straley S.C."/>
            <person name="McDonough K.A."/>
            <person name="Nilles M.L."/>
            <person name="Matson J.S."/>
            <person name="Blattner F.R."/>
            <person name="Perry R.D."/>
        </authorList>
    </citation>
    <scope>NUCLEOTIDE SEQUENCE [LARGE SCALE GENOMIC DNA]</scope>
    <source>
        <strain>KIM10+ / Biovar Mediaevalis</strain>
    </source>
</reference>
<reference key="3">
    <citation type="journal article" date="2004" name="DNA Res.">
        <title>Complete genome sequence of Yersinia pestis strain 91001, an isolate avirulent to humans.</title>
        <authorList>
            <person name="Song Y."/>
            <person name="Tong Z."/>
            <person name="Wang J."/>
            <person name="Wang L."/>
            <person name="Guo Z."/>
            <person name="Han Y."/>
            <person name="Zhang J."/>
            <person name="Pei D."/>
            <person name="Zhou D."/>
            <person name="Qin H."/>
            <person name="Pang X."/>
            <person name="Han Y."/>
            <person name="Zhai J."/>
            <person name="Li M."/>
            <person name="Cui B."/>
            <person name="Qi Z."/>
            <person name="Jin L."/>
            <person name="Dai R."/>
            <person name="Chen F."/>
            <person name="Li S."/>
            <person name="Ye C."/>
            <person name="Du Z."/>
            <person name="Lin W."/>
            <person name="Wang J."/>
            <person name="Yu J."/>
            <person name="Yang H."/>
            <person name="Wang J."/>
            <person name="Huang P."/>
            <person name="Yang R."/>
        </authorList>
    </citation>
    <scope>NUCLEOTIDE SEQUENCE [LARGE SCALE GENOMIC DNA]</scope>
    <source>
        <strain>91001 / Biovar Mediaevalis</strain>
    </source>
</reference>